<proteinExistence type="inferred from homology"/>
<sequence>MESVLNNEKAIVVFSGGQDSTTCLFYAKKHFKEVELVTFNYGQRHDTEIEVAKQIAQDQGMKHHVLDMSLLSQLTPNALTQHDMEITNNEDGIPNTFVPARNLLFLSFAGALAYQIGAKHIITGVCETDFSGYPDCRDSFIKSMNVTLSLAMDKDFVIHTPLMWLNKAETWKLSDELEVLDYIRTKTLTCYNGIIGDGCGECPACHLRQRGLNQYLESKGAL</sequence>
<protein>
    <recommendedName>
        <fullName evidence="1">7-cyano-7-deazaguanine synthase</fullName>
        <ecNumber evidence="1">6.3.4.20</ecNumber>
    </recommendedName>
    <alternativeName>
        <fullName evidence="1">7-cyano-7-carbaguanine synthase</fullName>
    </alternativeName>
    <alternativeName>
        <fullName evidence="1">PreQ(0) synthase</fullName>
    </alternativeName>
    <alternativeName>
        <fullName evidence="1">Queuosine biosynthesis protein QueC</fullName>
    </alternativeName>
</protein>
<accession>Q7A1I5</accession>
<gene>
    <name evidence="1" type="primary">queC</name>
    <name type="ordered locus">MW0674</name>
</gene>
<feature type="chain" id="PRO_0000246933" description="7-cyano-7-deazaguanine synthase">
    <location>
        <begin position="1"/>
        <end position="222"/>
    </location>
</feature>
<feature type="binding site" evidence="1">
    <location>
        <begin position="14"/>
        <end position="24"/>
    </location>
    <ligand>
        <name>ATP</name>
        <dbReference type="ChEBI" id="CHEBI:30616"/>
    </ligand>
</feature>
<feature type="binding site" evidence="1">
    <location>
        <position position="190"/>
    </location>
    <ligand>
        <name>Zn(2+)</name>
        <dbReference type="ChEBI" id="CHEBI:29105"/>
    </ligand>
</feature>
<feature type="binding site" evidence="1">
    <location>
        <position position="199"/>
    </location>
    <ligand>
        <name>Zn(2+)</name>
        <dbReference type="ChEBI" id="CHEBI:29105"/>
    </ligand>
</feature>
<feature type="binding site" evidence="1">
    <location>
        <position position="202"/>
    </location>
    <ligand>
        <name>Zn(2+)</name>
        <dbReference type="ChEBI" id="CHEBI:29105"/>
    </ligand>
</feature>
<feature type="binding site" evidence="1">
    <location>
        <position position="205"/>
    </location>
    <ligand>
        <name>Zn(2+)</name>
        <dbReference type="ChEBI" id="CHEBI:29105"/>
    </ligand>
</feature>
<organism>
    <name type="scientific">Staphylococcus aureus (strain MW2)</name>
    <dbReference type="NCBI Taxonomy" id="196620"/>
    <lineage>
        <taxon>Bacteria</taxon>
        <taxon>Bacillati</taxon>
        <taxon>Bacillota</taxon>
        <taxon>Bacilli</taxon>
        <taxon>Bacillales</taxon>
        <taxon>Staphylococcaceae</taxon>
        <taxon>Staphylococcus</taxon>
    </lineage>
</organism>
<evidence type="ECO:0000255" key="1">
    <source>
        <dbReference type="HAMAP-Rule" id="MF_01633"/>
    </source>
</evidence>
<dbReference type="EC" id="6.3.4.20" evidence="1"/>
<dbReference type="EMBL" id="BA000033">
    <property type="protein sequence ID" value="BAB94539.1"/>
    <property type="molecule type" value="Genomic_DNA"/>
</dbReference>
<dbReference type="RefSeq" id="WP_000446724.1">
    <property type="nucleotide sequence ID" value="NC_003923.1"/>
</dbReference>
<dbReference type="SMR" id="Q7A1I5"/>
<dbReference type="KEGG" id="sam:MW0674"/>
<dbReference type="HOGENOM" id="CLU_081854_0_0_9"/>
<dbReference type="UniPathway" id="UPA00391"/>
<dbReference type="GO" id="GO:0005524">
    <property type="term" value="F:ATP binding"/>
    <property type="evidence" value="ECO:0007669"/>
    <property type="project" value="UniProtKB-UniRule"/>
</dbReference>
<dbReference type="GO" id="GO:0016879">
    <property type="term" value="F:ligase activity, forming carbon-nitrogen bonds"/>
    <property type="evidence" value="ECO:0007669"/>
    <property type="project" value="UniProtKB-UniRule"/>
</dbReference>
<dbReference type="GO" id="GO:0008270">
    <property type="term" value="F:zinc ion binding"/>
    <property type="evidence" value="ECO:0007669"/>
    <property type="project" value="UniProtKB-UniRule"/>
</dbReference>
<dbReference type="GO" id="GO:0008616">
    <property type="term" value="P:queuosine biosynthetic process"/>
    <property type="evidence" value="ECO:0007669"/>
    <property type="project" value="UniProtKB-UniRule"/>
</dbReference>
<dbReference type="CDD" id="cd01995">
    <property type="entry name" value="QueC-like"/>
    <property type="match status" value="1"/>
</dbReference>
<dbReference type="FunFam" id="3.40.50.620:FF:000017">
    <property type="entry name" value="7-cyano-7-deazaguanine synthase"/>
    <property type="match status" value="1"/>
</dbReference>
<dbReference type="Gene3D" id="3.40.50.620">
    <property type="entry name" value="HUPs"/>
    <property type="match status" value="1"/>
</dbReference>
<dbReference type="HAMAP" id="MF_01633">
    <property type="entry name" value="QueC"/>
    <property type="match status" value="1"/>
</dbReference>
<dbReference type="InterPro" id="IPR018317">
    <property type="entry name" value="QueC"/>
</dbReference>
<dbReference type="InterPro" id="IPR014729">
    <property type="entry name" value="Rossmann-like_a/b/a_fold"/>
</dbReference>
<dbReference type="NCBIfam" id="TIGR00364">
    <property type="entry name" value="7-cyano-7-deazaguanine synthase QueC"/>
    <property type="match status" value="1"/>
</dbReference>
<dbReference type="PANTHER" id="PTHR42914">
    <property type="entry name" value="7-CYANO-7-DEAZAGUANINE SYNTHASE"/>
    <property type="match status" value="1"/>
</dbReference>
<dbReference type="PANTHER" id="PTHR42914:SF1">
    <property type="entry name" value="7-CYANO-7-DEAZAGUANINE SYNTHASE"/>
    <property type="match status" value="1"/>
</dbReference>
<dbReference type="Pfam" id="PF06508">
    <property type="entry name" value="QueC"/>
    <property type="match status" value="1"/>
</dbReference>
<dbReference type="PIRSF" id="PIRSF006293">
    <property type="entry name" value="ExsB"/>
    <property type="match status" value="1"/>
</dbReference>
<dbReference type="SUPFAM" id="SSF52402">
    <property type="entry name" value="Adenine nucleotide alpha hydrolases-like"/>
    <property type="match status" value="1"/>
</dbReference>
<keyword id="KW-0067">ATP-binding</keyword>
<keyword id="KW-0436">Ligase</keyword>
<keyword id="KW-0479">Metal-binding</keyword>
<keyword id="KW-0547">Nucleotide-binding</keyword>
<keyword id="KW-0671">Queuosine biosynthesis</keyword>
<keyword id="KW-0862">Zinc</keyword>
<reference key="1">
    <citation type="journal article" date="2002" name="Lancet">
        <title>Genome and virulence determinants of high virulence community-acquired MRSA.</title>
        <authorList>
            <person name="Baba T."/>
            <person name="Takeuchi F."/>
            <person name="Kuroda M."/>
            <person name="Yuzawa H."/>
            <person name="Aoki K."/>
            <person name="Oguchi A."/>
            <person name="Nagai Y."/>
            <person name="Iwama N."/>
            <person name="Asano K."/>
            <person name="Naimi T."/>
            <person name="Kuroda H."/>
            <person name="Cui L."/>
            <person name="Yamamoto K."/>
            <person name="Hiramatsu K."/>
        </authorList>
    </citation>
    <scope>NUCLEOTIDE SEQUENCE [LARGE SCALE GENOMIC DNA]</scope>
    <source>
        <strain>MW2</strain>
    </source>
</reference>
<name>QUEC_STAAW</name>
<comment type="function">
    <text evidence="1">Catalyzes the ATP-dependent conversion of 7-carboxy-7-deazaguanine (CDG) to 7-cyano-7-deazaguanine (preQ(0)).</text>
</comment>
<comment type="catalytic activity">
    <reaction evidence="1">
        <text>7-carboxy-7-deazaguanine + NH4(+) + ATP = 7-cyano-7-deazaguanine + ADP + phosphate + H2O + H(+)</text>
        <dbReference type="Rhea" id="RHEA:27982"/>
        <dbReference type="ChEBI" id="CHEBI:15377"/>
        <dbReference type="ChEBI" id="CHEBI:15378"/>
        <dbReference type="ChEBI" id="CHEBI:28938"/>
        <dbReference type="ChEBI" id="CHEBI:30616"/>
        <dbReference type="ChEBI" id="CHEBI:43474"/>
        <dbReference type="ChEBI" id="CHEBI:45075"/>
        <dbReference type="ChEBI" id="CHEBI:61036"/>
        <dbReference type="ChEBI" id="CHEBI:456216"/>
        <dbReference type="EC" id="6.3.4.20"/>
    </reaction>
</comment>
<comment type="cofactor">
    <cofactor evidence="1">
        <name>Zn(2+)</name>
        <dbReference type="ChEBI" id="CHEBI:29105"/>
    </cofactor>
    <text evidence="1">Binds 1 zinc ion per subunit.</text>
</comment>
<comment type="pathway">
    <text evidence="1">Purine metabolism; 7-cyano-7-deazaguanine biosynthesis.</text>
</comment>
<comment type="subunit">
    <text evidence="1">Homodimer.</text>
</comment>
<comment type="similarity">
    <text evidence="1">Belongs to the QueC family.</text>
</comment>